<gene>
    <name evidence="1" type="primary">PB1</name>
</gene>
<protein>
    <recommendedName>
        <fullName evidence="1">RNA-directed RNA polymerase catalytic subunit</fullName>
        <ecNumber evidence="1">2.7.7.48</ecNumber>
    </recommendedName>
    <alternativeName>
        <fullName evidence="1">Polymerase basic protein 1</fullName>
        <shortName evidence="1">PB1</shortName>
    </alternativeName>
    <alternativeName>
        <fullName evidence="1">RNA-directed RNA polymerase subunit P1</fullName>
    </alternativeName>
</protein>
<organism>
    <name type="scientific">Influenza A virus (strain A/Memphis/101/1972 H3N2)</name>
    <dbReference type="NCBI Taxonomy" id="383583"/>
    <lineage>
        <taxon>Viruses</taxon>
        <taxon>Riboviria</taxon>
        <taxon>Orthornavirae</taxon>
        <taxon>Negarnaviricota</taxon>
        <taxon>Polyploviricotina</taxon>
        <taxon>Insthoviricetes</taxon>
        <taxon>Articulavirales</taxon>
        <taxon>Orthomyxoviridae</taxon>
        <taxon>Alphainfluenzavirus</taxon>
        <taxon>Alphainfluenzavirus influenzae</taxon>
        <taxon>Influenza A virus</taxon>
    </lineage>
</organism>
<accession>Q2ICQ2</accession>
<feature type="chain" id="PRO_0000279607" description="RNA-directed RNA polymerase catalytic subunit">
    <location>
        <begin position="1"/>
        <end position="757"/>
    </location>
</feature>
<feature type="domain" description="RdRp catalytic" evidence="1">
    <location>
        <begin position="286"/>
        <end position="483"/>
    </location>
</feature>
<feature type="region of interest" description="Disordered" evidence="2">
    <location>
        <begin position="50"/>
        <end position="82"/>
    </location>
</feature>
<feature type="region of interest" description="Promoter-binding site" evidence="1">
    <location>
        <begin position="249"/>
        <end position="256"/>
    </location>
</feature>
<feature type="short sequence motif" description="Nuclear localization signal" evidence="1">
    <location>
        <begin position="187"/>
        <end position="195"/>
    </location>
</feature>
<feature type="short sequence motif" description="Nuclear localization signal" evidence="1">
    <location>
        <begin position="203"/>
        <end position="216"/>
    </location>
</feature>
<feature type="compositionally biased region" description="Polar residues" evidence="2">
    <location>
        <begin position="55"/>
        <end position="64"/>
    </location>
</feature>
<comment type="function">
    <text evidence="1">RNA-dependent RNA polymerase which is responsible for replication and transcription of virus RNA segments. The transcription of viral mRNAs occurs by a unique mechanism called cap-snatching. 5' methylated caps of cellular mRNAs are cleaved after 10-13 nucleotides by PA. In turn, these short capped RNAs are used as primers by PB1 for transcription of viral mRNAs. During virus replication, PB1 initiates RNA synthesis and copy vRNA into complementary RNA (cRNA) which in turn serves as a template for the production of more vRNAs.</text>
</comment>
<comment type="catalytic activity">
    <reaction evidence="1">
        <text>RNA(n) + a ribonucleoside 5'-triphosphate = RNA(n+1) + diphosphate</text>
        <dbReference type="Rhea" id="RHEA:21248"/>
        <dbReference type="Rhea" id="RHEA-COMP:14527"/>
        <dbReference type="Rhea" id="RHEA-COMP:17342"/>
        <dbReference type="ChEBI" id="CHEBI:33019"/>
        <dbReference type="ChEBI" id="CHEBI:61557"/>
        <dbReference type="ChEBI" id="CHEBI:140395"/>
        <dbReference type="EC" id="2.7.7.48"/>
    </reaction>
</comment>
<comment type="subunit">
    <text evidence="1">Influenza RNA polymerase is composed of three subunits: PB1, PB2 and PA. Interacts (via N-terminus) with PA (via C-terminus). Interacts (via C-terminus) with PB2 (via N-terminus); this interaction is essential for transcription initiation.</text>
</comment>
<comment type="subcellular location">
    <subcellularLocation>
        <location evidence="1">Host nucleus</location>
    </subcellularLocation>
    <subcellularLocation>
        <location evidence="1">Host cytoplasm</location>
    </subcellularLocation>
</comment>
<comment type="PTM">
    <text evidence="1">Phosphorylated by host PRKCA.</text>
</comment>
<comment type="similarity">
    <text evidence="1">Belongs to the influenza viruses polymerase PB1 family.</text>
</comment>
<name>RDRP_I72A4</name>
<proteinExistence type="inferred from homology"/>
<evidence type="ECO:0000255" key="1">
    <source>
        <dbReference type="HAMAP-Rule" id="MF_04065"/>
    </source>
</evidence>
<evidence type="ECO:0000256" key="2">
    <source>
        <dbReference type="SAM" id="MobiDB-lite"/>
    </source>
</evidence>
<dbReference type="EC" id="2.7.7.48" evidence="1"/>
<dbReference type="EMBL" id="CY008682">
    <property type="protein sequence ID" value="ABD17331.1"/>
    <property type="molecule type" value="Genomic_RNA"/>
</dbReference>
<dbReference type="SMR" id="Q2ICQ2"/>
<dbReference type="Proteomes" id="UP000009189">
    <property type="component" value="Genome"/>
</dbReference>
<dbReference type="GO" id="GO:0030430">
    <property type="term" value="C:host cell cytoplasm"/>
    <property type="evidence" value="ECO:0007669"/>
    <property type="project" value="UniProtKB-SubCell"/>
</dbReference>
<dbReference type="GO" id="GO:0042025">
    <property type="term" value="C:host cell nucleus"/>
    <property type="evidence" value="ECO:0007669"/>
    <property type="project" value="UniProtKB-SubCell"/>
</dbReference>
<dbReference type="GO" id="GO:0000166">
    <property type="term" value="F:nucleotide binding"/>
    <property type="evidence" value="ECO:0007669"/>
    <property type="project" value="UniProtKB-UniRule"/>
</dbReference>
<dbReference type="GO" id="GO:0003723">
    <property type="term" value="F:RNA binding"/>
    <property type="evidence" value="ECO:0007669"/>
    <property type="project" value="InterPro"/>
</dbReference>
<dbReference type="GO" id="GO:0003968">
    <property type="term" value="F:RNA-directed RNA polymerase activity"/>
    <property type="evidence" value="ECO:0007669"/>
    <property type="project" value="UniProtKB-UniRule"/>
</dbReference>
<dbReference type="GO" id="GO:0006351">
    <property type="term" value="P:DNA-templated transcription"/>
    <property type="evidence" value="ECO:0007669"/>
    <property type="project" value="UniProtKB-UniRule"/>
</dbReference>
<dbReference type="GO" id="GO:0039657">
    <property type="term" value="P:symbiont-mediated suppression of host gene expression"/>
    <property type="evidence" value="ECO:0007669"/>
    <property type="project" value="UniProtKB-KW"/>
</dbReference>
<dbReference type="GO" id="GO:0039523">
    <property type="term" value="P:symbiont-mediated suppression of host mRNA transcription via inhibition of RNA polymerase II activity"/>
    <property type="evidence" value="ECO:0007669"/>
    <property type="project" value="UniProtKB-UniRule"/>
</dbReference>
<dbReference type="GO" id="GO:0039694">
    <property type="term" value="P:viral RNA genome replication"/>
    <property type="evidence" value="ECO:0007669"/>
    <property type="project" value="UniProtKB-UniRule"/>
</dbReference>
<dbReference type="GO" id="GO:0019083">
    <property type="term" value="P:viral transcription"/>
    <property type="evidence" value="ECO:0007669"/>
    <property type="project" value="UniProtKB-KW"/>
</dbReference>
<dbReference type="Gene3D" id="6.10.140.720">
    <property type="match status" value="1"/>
</dbReference>
<dbReference type="HAMAP" id="MF_04065">
    <property type="entry name" value="INFV_RDRP"/>
    <property type="match status" value="1"/>
</dbReference>
<dbReference type="InterPro" id="IPR007099">
    <property type="entry name" value="RNA-dir_pol_NSvirus"/>
</dbReference>
<dbReference type="InterPro" id="IPR001407">
    <property type="entry name" value="RNA_pol_PB1_influenza"/>
</dbReference>
<dbReference type="Pfam" id="PF00602">
    <property type="entry name" value="Flu_PB1"/>
    <property type="match status" value="1"/>
</dbReference>
<dbReference type="PIRSF" id="PIRSF000827">
    <property type="entry name" value="RdRPol_OMV"/>
    <property type="match status" value="1"/>
</dbReference>
<dbReference type="PROSITE" id="PS50525">
    <property type="entry name" value="RDRP_SSRNA_NEG_SEG"/>
    <property type="match status" value="1"/>
</dbReference>
<sequence length="757" mass="86425">MDVNPTLLFLKVPAQNAISTTFPYTGDPPYSHGTGTGYTMDTVNRTHQYSEKGKWTTNTETGAPQLNPIDGPLPEDNEPSGYAQTDCVLEAMAFLEESHPGIFENSCLETMEVVQQTRVDKLTQGRQTYDWTLNRNQPAATALANTIEVFRSNGLTANESGRLIDFLKDVMESMDKEEMEITTHFQRKRRVRDNMTKKMVTQRTIGKKKQRVNKRSYLIRALTLNTMTKDAERGKLKRRAIATPGMQIRGFVYFVETLARSICEKLEQSGLPVGGNEKKAKLANVVRKMMTNSQDTELSFTITGDNTKWNENQNPRMFLAMITYITKNQPEWFRNILSIAPIMFSNKMARLGKGYMFESKRMKLRTQIPAEMLASIDLKYFNESTRKKIEKIRPLLIDGTASLSPGMMMGMFNMLSTVLGVSILNLGQKKYTKTTYWWDGLQSSDDFALIVNAPNHEGIQAGVDRFYRTCKLVGINMSKKKSYINRTGTFEFTSFFYRYGFVANFSMELPSFGVSGINESADMSIGVTVIKNNMINNDLGPATAQMALQLFIKDYRYTYRCHRGDTQIQTRRSFELKKLWEQTRSKAGLLVSDGGPNLYNIRNLHIPEVCLKWELMDEDYQGRLCNPLNPFVSHKEIESVNNAVVMPAHGPAKSMEYDAVATTHSWIPKRNRSILNTSQRGILEDEQMYQKCCNLFEKFFPSSSYRRPVGISSMVEAMVSRARIDARVDFESGRIKKEEFAEIMKICSTIEELRRQK</sequence>
<reference key="1">
    <citation type="submission" date="2006-02" db="EMBL/GenBank/DDBJ databases">
        <title>The NIAID influenza genome sequencing project.</title>
        <authorList>
            <person name="Ghedin E."/>
            <person name="Spiro D."/>
            <person name="Miller N."/>
            <person name="Zaborsky J."/>
            <person name="Feldblyum T."/>
            <person name="Subbu V."/>
            <person name="Shumway M."/>
            <person name="Sparenborg J."/>
            <person name="Groveman L."/>
            <person name="Halpin R."/>
            <person name="Sitz J."/>
            <person name="Koo H."/>
            <person name="Salzberg S.L."/>
            <person name="Webster R.G."/>
            <person name="Hoffmann E."/>
            <person name="Krauss S."/>
            <person name="Naeve C."/>
            <person name="Bao Y."/>
            <person name="Bolotov P."/>
            <person name="Dernovoy D."/>
            <person name="Kiryutin B."/>
            <person name="Lipman D.J."/>
            <person name="Tatusova T."/>
        </authorList>
    </citation>
    <scope>NUCLEOTIDE SEQUENCE [GENOMIC RNA]</scope>
</reference>
<keyword id="KW-1262">Eukaryotic host gene expression shutoff by virus</keyword>
<keyword id="KW-1191">Eukaryotic host transcription shutoff by virus</keyword>
<keyword id="KW-1035">Host cytoplasm</keyword>
<keyword id="KW-1190">Host gene expression shutoff by virus</keyword>
<keyword id="KW-1048">Host nucleus</keyword>
<keyword id="KW-0945">Host-virus interaction</keyword>
<keyword id="KW-1104">Inhibition of host RNA polymerase II by virus</keyword>
<keyword id="KW-0547">Nucleotide-binding</keyword>
<keyword id="KW-0548">Nucleotidyltransferase</keyword>
<keyword id="KW-0597">Phosphoprotein</keyword>
<keyword id="KW-0696">RNA-directed RNA polymerase</keyword>
<keyword id="KW-0808">Transferase</keyword>
<keyword id="KW-0693">Viral RNA replication</keyword>
<keyword id="KW-1195">Viral transcription</keyword>
<organismHost>
    <name type="scientific">Aves</name>
    <dbReference type="NCBI Taxonomy" id="8782"/>
</organismHost>
<organismHost>
    <name type="scientific">Cetacea</name>
    <name type="common">whales</name>
    <dbReference type="NCBI Taxonomy" id="9721"/>
</organismHost>
<organismHost>
    <name type="scientific">Homo sapiens</name>
    <name type="common">Human</name>
    <dbReference type="NCBI Taxonomy" id="9606"/>
</organismHost>
<organismHost>
    <name type="scientific">Phocidae</name>
    <name type="common">true seals</name>
    <dbReference type="NCBI Taxonomy" id="9709"/>
</organismHost>
<organismHost>
    <name type="scientific">Sus scrofa</name>
    <name type="common">Pig</name>
    <dbReference type="NCBI Taxonomy" id="9823"/>
</organismHost>